<reference key="1">
    <citation type="journal article" date="2005" name="J. Infect. Dis.">
        <title>Genome sequence of a serotype M28 strain of group A Streptococcus: potential new insights into puerperal sepsis and bacterial disease specificity.</title>
        <authorList>
            <person name="Green N.M."/>
            <person name="Zhang S."/>
            <person name="Porcella S.F."/>
            <person name="Nagiec M.J."/>
            <person name="Barbian K.D."/>
            <person name="Beres S.B."/>
            <person name="Lefebvre R.B."/>
            <person name="Musser J.M."/>
        </authorList>
    </citation>
    <scope>NUCLEOTIDE SEQUENCE [LARGE SCALE GENOMIC DNA]</scope>
    <source>
        <strain>MGAS6180</strain>
    </source>
</reference>
<keyword id="KW-0687">Ribonucleoprotein</keyword>
<keyword id="KW-0689">Ribosomal protein</keyword>
<keyword id="KW-0694">RNA-binding</keyword>
<keyword id="KW-0699">rRNA-binding</keyword>
<protein>
    <recommendedName>
        <fullName evidence="1">Small ribosomal subunit protein bS6</fullName>
    </recommendedName>
    <alternativeName>
        <fullName evidence="2">30S ribosomal protein S6</fullName>
    </alternativeName>
</protein>
<organism>
    <name type="scientific">Streptococcus pyogenes serotype M28 (strain MGAS6180)</name>
    <dbReference type="NCBI Taxonomy" id="319701"/>
    <lineage>
        <taxon>Bacteria</taxon>
        <taxon>Bacillati</taxon>
        <taxon>Bacillota</taxon>
        <taxon>Bacilli</taxon>
        <taxon>Lactobacillales</taxon>
        <taxon>Streptococcaceae</taxon>
        <taxon>Streptococcus</taxon>
    </lineage>
</organism>
<accession>Q48RK8</accession>
<sequence length="96" mass="11082">MAKYEILYIIRPNIEEEAKNALVARFDSILTDNGATVVESKDWEKRRLAYEINDFREGLYHIVNLEATDAAALNEFDRLSKINGDILRHMIVKLDA</sequence>
<comment type="function">
    <text evidence="1">Binds together with bS18 to 16S ribosomal RNA.</text>
</comment>
<comment type="similarity">
    <text evidence="1">Belongs to the bacterial ribosomal protein bS6 family.</text>
</comment>
<gene>
    <name evidence="1" type="primary">rpsF</name>
    <name type="ordered locus">M28_Spy1542</name>
</gene>
<proteinExistence type="inferred from homology"/>
<dbReference type="EMBL" id="CP000056">
    <property type="protein sequence ID" value="AAX72652.1"/>
    <property type="molecule type" value="Genomic_DNA"/>
</dbReference>
<dbReference type="RefSeq" id="WP_002983117.1">
    <property type="nucleotide sequence ID" value="NC_007296.2"/>
</dbReference>
<dbReference type="SMR" id="Q48RK8"/>
<dbReference type="GeneID" id="83689976"/>
<dbReference type="KEGG" id="spb:M28_Spy1542"/>
<dbReference type="HOGENOM" id="CLU_113441_5_3_9"/>
<dbReference type="GO" id="GO:0005737">
    <property type="term" value="C:cytoplasm"/>
    <property type="evidence" value="ECO:0007669"/>
    <property type="project" value="UniProtKB-ARBA"/>
</dbReference>
<dbReference type="GO" id="GO:1990904">
    <property type="term" value="C:ribonucleoprotein complex"/>
    <property type="evidence" value="ECO:0007669"/>
    <property type="project" value="UniProtKB-KW"/>
</dbReference>
<dbReference type="GO" id="GO:0005840">
    <property type="term" value="C:ribosome"/>
    <property type="evidence" value="ECO:0007669"/>
    <property type="project" value="UniProtKB-KW"/>
</dbReference>
<dbReference type="GO" id="GO:0070181">
    <property type="term" value="F:small ribosomal subunit rRNA binding"/>
    <property type="evidence" value="ECO:0007669"/>
    <property type="project" value="TreeGrafter"/>
</dbReference>
<dbReference type="GO" id="GO:0003735">
    <property type="term" value="F:structural constituent of ribosome"/>
    <property type="evidence" value="ECO:0007669"/>
    <property type="project" value="InterPro"/>
</dbReference>
<dbReference type="GO" id="GO:0006412">
    <property type="term" value="P:translation"/>
    <property type="evidence" value="ECO:0007669"/>
    <property type="project" value="UniProtKB-UniRule"/>
</dbReference>
<dbReference type="CDD" id="cd00473">
    <property type="entry name" value="bS6"/>
    <property type="match status" value="1"/>
</dbReference>
<dbReference type="FunFam" id="3.30.70.60:FF:000002">
    <property type="entry name" value="30S ribosomal protein S6"/>
    <property type="match status" value="1"/>
</dbReference>
<dbReference type="Gene3D" id="3.30.70.60">
    <property type="match status" value="1"/>
</dbReference>
<dbReference type="HAMAP" id="MF_00360">
    <property type="entry name" value="Ribosomal_bS6"/>
    <property type="match status" value="1"/>
</dbReference>
<dbReference type="InterPro" id="IPR000529">
    <property type="entry name" value="Ribosomal_bS6"/>
</dbReference>
<dbReference type="InterPro" id="IPR035980">
    <property type="entry name" value="Ribosomal_bS6_sf"/>
</dbReference>
<dbReference type="InterPro" id="IPR020814">
    <property type="entry name" value="Ribosomal_S6_plastid/chlpt"/>
</dbReference>
<dbReference type="InterPro" id="IPR014717">
    <property type="entry name" value="Transl_elong_EF1B/ribsomal_bS6"/>
</dbReference>
<dbReference type="NCBIfam" id="TIGR00166">
    <property type="entry name" value="S6"/>
    <property type="match status" value="1"/>
</dbReference>
<dbReference type="PANTHER" id="PTHR21011">
    <property type="entry name" value="MITOCHONDRIAL 28S RIBOSOMAL PROTEIN S6"/>
    <property type="match status" value="1"/>
</dbReference>
<dbReference type="PANTHER" id="PTHR21011:SF1">
    <property type="entry name" value="SMALL RIBOSOMAL SUBUNIT PROTEIN BS6M"/>
    <property type="match status" value="1"/>
</dbReference>
<dbReference type="Pfam" id="PF01250">
    <property type="entry name" value="Ribosomal_S6"/>
    <property type="match status" value="1"/>
</dbReference>
<dbReference type="SUPFAM" id="SSF54995">
    <property type="entry name" value="Ribosomal protein S6"/>
    <property type="match status" value="1"/>
</dbReference>
<name>RS6_STRPM</name>
<evidence type="ECO:0000255" key="1">
    <source>
        <dbReference type="HAMAP-Rule" id="MF_00360"/>
    </source>
</evidence>
<evidence type="ECO:0000305" key="2"/>
<feature type="chain" id="PRO_0000229582" description="Small ribosomal subunit protein bS6">
    <location>
        <begin position="1"/>
        <end position="96"/>
    </location>
</feature>